<feature type="chain" id="PRO_0000184326" description="Ribosomal RNA small subunit methyltransferase G">
    <location>
        <begin position="1"/>
        <end position="207"/>
    </location>
</feature>
<feature type="binding site" evidence="1">
    <location>
        <position position="73"/>
    </location>
    <ligand>
        <name>S-adenosyl-L-methionine</name>
        <dbReference type="ChEBI" id="CHEBI:59789"/>
    </ligand>
</feature>
<feature type="binding site" evidence="1">
    <location>
        <position position="78"/>
    </location>
    <ligand>
        <name>S-adenosyl-L-methionine</name>
        <dbReference type="ChEBI" id="CHEBI:59789"/>
    </ligand>
</feature>
<feature type="binding site" evidence="1">
    <location>
        <begin position="124"/>
        <end position="125"/>
    </location>
    <ligand>
        <name>S-adenosyl-L-methionine</name>
        <dbReference type="ChEBI" id="CHEBI:59789"/>
    </ligand>
</feature>
<feature type="binding site" evidence="1">
    <location>
        <position position="139"/>
    </location>
    <ligand>
        <name>S-adenosyl-L-methionine</name>
        <dbReference type="ChEBI" id="CHEBI:59789"/>
    </ligand>
</feature>
<feature type="sequence conflict" description="In Ref. 2; AAP18937." evidence="2" ref="2">
    <original>S</original>
    <variation>T</variation>
    <location>
        <position position="74"/>
    </location>
</feature>
<reference key="1">
    <citation type="journal article" date="2002" name="Nucleic Acids Res.">
        <title>Genome sequence of Shigella flexneri 2a: insights into pathogenicity through comparison with genomes of Escherichia coli K12 and O157.</title>
        <authorList>
            <person name="Jin Q."/>
            <person name="Yuan Z."/>
            <person name="Xu J."/>
            <person name="Wang Y."/>
            <person name="Shen Y."/>
            <person name="Lu W."/>
            <person name="Wang J."/>
            <person name="Liu H."/>
            <person name="Yang J."/>
            <person name="Yang F."/>
            <person name="Zhang X."/>
            <person name="Zhang J."/>
            <person name="Yang G."/>
            <person name="Wu H."/>
            <person name="Qu D."/>
            <person name="Dong J."/>
            <person name="Sun L."/>
            <person name="Xue Y."/>
            <person name="Zhao A."/>
            <person name="Gao Y."/>
            <person name="Zhu J."/>
            <person name="Kan B."/>
            <person name="Ding K."/>
            <person name="Chen S."/>
            <person name="Cheng H."/>
            <person name="Yao Z."/>
            <person name="He B."/>
            <person name="Chen R."/>
            <person name="Ma D."/>
            <person name="Qiang B."/>
            <person name="Wen Y."/>
            <person name="Hou Y."/>
            <person name="Yu J."/>
        </authorList>
    </citation>
    <scope>NUCLEOTIDE SEQUENCE [LARGE SCALE GENOMIC DNA]</scope>
    <source>
        <strain>301 / Serotype 2a</strain>
    </source>
</reference>
<reference key="2">
    <citation type="journal article" date="2003" name="Infect. Immun.">
        <title>Complete genome sequence and comparative genomics of Shigella flexneri serotype 2a strain 2457T.</title>
        <authorList>
            <person name="Wei J."/>
            <person name="Goldberg M.B."/>
            <person name="Burland V."/>
            <person name="Venkatesan M.M."/>
            <person name="Deng W."/>
            <person name="Fournier G."/>
            <person name="Mayhew G.F."/>
            <person name="Plunkett G. III"/>
            <person name="Rose D.J."/>
            <person name="Darling A."/>
            <person name="Mau B."/>
            <person name="Perna N.T."/>
            <person name="Payne S.M."/>
            <person name="Runyen-Janecky L.J."/>
            <person name="Zhou S."/>
            <person name="Schwartz D.C."/>
            <person name="Blattner F.R."/>
        </authorList>
    </citation>
    <scope>NUCLEOTIDE SEQUENCE [LARGE SCALE GENOMIC DNA]</scope>
    <source>
        <strain>ATCC 700930 / 2457T / Serotype 2a</strain>
    </source>
</reference>
<gene>
    <name evidence="1" type="primary">rsmG</name>
    <name type="ordered locus">SF3820</name>
    <name type="ordered locus">S3948</name>
</gene>
<sequence>MLNKLSLLLKDAGISLTDHQKNQLIAYVNMLHKWNKAYNLTSVRDPNEMLVRHILDSIVVAPYLQGERFIDVGSGPGLPGIPLSIVRPEAHFTLLDSLGKRVRFLRQVQHELKLENIEPVQSRVEEFPSEPPFDGVISRAFASLNDMVSWCHHLPGEQGRFYALKGQMPEDEIALLPEEYQVESVVKLQVPALDGERHLVVIKANKI</sequence>
<name>RSMG_SHIFL</name>
<organism>
    <name type="scientific">Shigella flexneri</name>
    <dbReference type="NCBI Taxonomy" id="623"/>
    <lineage>
        <taxon>Bacteria</taxon>
        <taxon>Pseudomonadati</taxon>
        <taxon>Pseudomonadota</taxon>
        <taxon>Gammaproteobacteria</taxon>
        <taxon>Enterobacterales</taxon>
        <taxon>Enterobacteriaceae</taxon>
        <taxon>Shigella</taxon>
    </lineage>
</organism>
<protein>
    <recommendedName>
        <fullName evidence="1">Ribosomal RNA small subunit methyltransferase G</fullName>
        <ecNumber evidence="1">2.1.1.170</ecNumber>
    </recommendedName>
    <alternativeName>
        <fullName evidence="1">16S rRNA 7-methylguanosine methyltransferase</fullName>
        <shortName evidence="1">16S rRNA m7G methyltransferase</shortName>
    </alternativeName>
</protein>
<keyword id="KW-0963">Cytoplasm</keyword>
<keyword id="KW-0489">Methyltransferase</keyword>
<keyword id="KW-1185">Reference proteome</keyword>
<keyword id="KW-0698">rRNA processing</keyword>
<keyword id="KW-0949">S-adenosyl-L-methionine</keyword>
<keyword id="KW-0808">Transferase</keyword>
<comment type="function">
    <text evidence="1">Specifically methylates the N7 position of guanine in position 527 of 16S rRNA.</text>
</comment>
<comment type="catalytic activity">
    <reaction evidence="1">
        <text>guanosine(527) in 16S rRNA + S-adenosyl-L-methionine = N(7)-methylguanosine(527) in 16S rRNA + S-adenosyl-L-homocysteine</text>
        <dbReference type="Rhea" id="RHEA:42732"/>
        <dbReference type="Rhea" id="RHEA-COMP:10209"/>
        <dbReference type="Rhea" id="RHEA-COMP:10210"/>
        <dbReference type="ChEBI" id="CHEBI:57856"/>
        <dbReference type="ChEBI" id="CHEBI:59789"/>
        <dbReference type="ChEBI" id="CHEBI:74269"/>
        <dbReference type="ChEBI" id="CHEBI:74480"/>
        <dbReference type="EC" id="2.1.1.170"/>
    </reaction>
</comment>
<comment type="subcellular location">
    <subcellularLocation>
        <location evidence="1">Cytoplasm</location>
    </subcellularLocation>
</comment>
<comment type="similarity">
    <text evidence="1">Belongs to the methyltransferase superfamily. RNA methyltransferase RsmG family.</text>
</comment>
<proteinExistence type="inferred from homology"/>
<evidence type="ECO:0000255" key="1">
    <source>
        <dbReference type="HAMAP-Rule" id="MF_00074"/>
    </source>
</evidence>
<evidence type="ECO:0000305" key="2"/>
<accession>Q83PJ7</accession>
<dbReference type="EC" id="2.1.1.170" evidence="1"/>
<dbReference type="EMBL" id="AE005674">
    <property type="protein sequence ID" value="AAN45260.1"/>
    <property type="molecule type" value="Genomic_DNA"/>
</dbReference>
<dbReference type="EMBL" id="AE014073">
    <property type="protein sequence ID" value="AAP18937.1"/>
    <property type="molecule type" value="Genomic_DNA"/>
</dbReference>
<dbReference type="RefSeq" id="WP_000932833.1">
    <property type="nucleotide sequence ID" value="NZ_CP123365.1"/>
</dbReference>
<dbReference type="SMR" id="Q83PJ7"/>
<dbReference type="STRING" id="198214.SF3820"/>
<dbReference type="PaxDb" id="198214-SF3820"/>
<dbReference type="KEGG" id="sfl:SF3820"/>
<dbReference type="KEGG" id="sfx:S3948"/>
<dbReference type="PATRIC" id="fig|198214.7.peg.4508"/>
<dbReference type="HOGENOM" id="CLU_065341_2_2_6"/>
<dbReference type="Proteomes" id="UP000001006">
    <property type="component" value="Chromosome"/>
</dbReference>
<dbReference type="Proteomes" id="UP000002673">
    <property type="component" value="Chromosome"/>
</dbReference>
<dbReference type="GO" id="GO:0005829">
    <property type="term" value="C:cytosol"/>
    <property type="evidence" value="ECO:0007669"/>
    <property type="project" value="TreeGrafter"/>
</dbReference>
<dbReference type="GO" id="GO:0070043">
    <property type="term" value="F:rRNA (guanine-N7-)-methyltransferase activity"/>
    <property type="evidence" value="ECO:0007669"/>
    <property type="project" value="UniProtKB-UniRule"/>
</dbReference>
<dbReference type="CDD" id="cd02440">
    <property type="entry name" value="AdoMet_MTases"/>
    <property type="match status" value="1"/>
</dbReference>
<dbReference type="FunFam" id="3.40.50.150:FF:000032">
    <property type="entry name" value="Ribosomal RNA small subunit methyltransferase G"/>
    <property type="match status" value="1"/>
</dbReference>
<dbReference type="Gene3D" id="3.40.50.150">
    <property type="entry name" value="Vaccinia Virus protein VP39"/>
    <property type="match status" value="1"/>
</dbReference>
<dbReference type="HAMAP" id="MF_00074">
    <property type="entry name" value="16SrRNA_methyltr_G"/>
    <property type="match status" value="1"/>
</dbReference>
<dbReference type="InterPro" id="IPR003682">
    <property type="entry name" value="rRNA_ssu_MeTfrase_G"/>
</dbReference>
<dbReference type="InterPro" id="IPR029063">
    <property type="entry name" value="SAM-dependent_MTases_sf"/>
</dbReference>
<dbReference type="NCBIfam" id="TIGR00138">
    <property type="entry name" value="rsmG_gidB"/>
    <property type="match status" value="1"/>
</dbReference>
<dbReference type="PANTHER" id="PTHR31760">
    <property type="entry name" value="S-ADENOSYL-L-METHIONINE-DEPENDENT METHYLTRANSFERASES SUPERFAMILY PROTEIN"/>
    <property type="match status" value="1"/>
</dbReference>
<dbReference type="PANTHER" id="PTHR31760:SF0">
    <property type="entry name" value="S-ADENOSYL-L-METHIONINE-DEPENDENT METHYLTRANSFERASES SUPERFAMILY PROTEIN"/>
    <property type="match status" value="1"/>
</dbReference>
<dbReference type="Pfam" id="PF02527">
    <property type="entry name" value="GidB"/>
    <property type="match status" value="1"/>
</dbReference>
<dbReference type="PIRSF" id="PIRSF003078">
    <property type="entry name" value="GidB"/>
    <property type="match status" value="1"/>
</dbReference>
<dbReference type="SUPFAM" id="SSF53335">
    <property type="entry name" value="S-adenosyl-L-methionine-dependent methyltransferases"/>
    <property type="match status" value="1"/>
</dbReference>